<protein>
    <recommendedName>
        <fullName>HPr kinase/phosphorylase</fullName>
        <shortName>HPrK/P</shortName>
        <ecNumber>2.7.11.-</ecNumber>
        <ecNumber>2.7.4.-</ecNumber>
    </recommendedName>
    <alternativeName>
        <fullName>HPr(Ser) kinase/phosphorylase</fullName>
    </alternativeName>
</protein>
<feature type="chain" id="PRO_0000059001" description="HPr kinase/phosphorylase">
    <location>
        <begin position="1"/>
        <end position="310"/>
    </location>
</feature>
<feature type="region of interest" description="Important for the catalytic mechanism of both phosphorylation and dephosphorylation" evidence="1">
    <location>
        <begin position="201"/>
        <end position="210"/>
    </location>
</feature>
<feature type="region of interest" description="Important for the catalytic mechanism of dephosphorylation" evidence="1">
    <location>
        <begin position="264"/>
        <end position="269"/>
    </location>
</feature>
<feature type="active site" evidence="1">
    <location>
        <position position="138"/>
    </location>
</feature>
<feature type="active site" evidence="1">
    <location>
        <position position="159"/>
    </location>
</feature>
<feature type="active site" description="Proton acceptor; for phosphorylation activity. Proton donor; for dephosphorylation activity" evidence="1">
    <location>
        <position position="177"/>
    </location>
</feature>
<feature type="active site" evidence="1">
    <location>
        <position position="243"/>
    </location>
</feature>
<feature type="binding site" evidence="1">
    <location>
        <begin position="153"/>
        <end position="160"/>
    </location>
    <ligand>
        <name>ATP</name>
        <dbReference type="ChEBI" id="CHEBI:30616"/>
    </ligand>
</feature>
<feature type="binding site" evidence="2">
    <location>
        <position position="160"/>
    </location>
    <ligand>
        <name>Mg(2+)</name>
        <dbReference type="ChEBI" id="CHEBI:18420"/>
    </ligand>
</feature>
<feature type="binding site" evidence="2">
    <location>
        <position position="202"/>
    </location>
    <ligand>
        <name>Mg(2+)</name>
        <dbReference type="ChEBI" id="CHEBI:18420"/>
    </ligand>
</feature>
<proteinExistence type="inferred from homology"/>
<evidence type="ECO:0000250" key="1"/>
<evidence type="ECO:0000255" key="2"/>
<evidence type="ECO:0000305" key="3"/>
<reference key="1">
    <citation type="journal article" date="2002" name="Proc. Natl. Acad. Sci. U.S.A.">
        <title>Genome sequence and comparative microarray analysis of serotype M18 group A Streptococcus strains associated with acute rheumatic fever outbreaks.</title>
        <authorList>
            <person name="Smoot J.C."/>
            <person name="Barbian K.D."/>
            <person name="Van Gompel J.J."/>
            <person name="Smoot L.M."/>
            <person name="Chaussee M.S."/>
            <person name="Sylva G.L."/>
            <person name="Sturdevant D.E."/>
            <person name="Ricklefs S.M."/>
            <person name="Porcella S.F."/>
            <person name="Parkins L.D."/>
            <person name="Beres S.B."/>
            <person name="Campbell D.S."/>
            <person name="Smith T.M."/>
            <person name="Zhang Q."/>
            <person name="Kapur V."/>
            <person name="Daly J.A."/>
            <person name="Veasy L.G."/>
            <person name="Musser J.M."/>
        </authorList>
    </citation>
    <scope>NUCLEOTIDE SEQUENCE [LARGE SCALE GENOMIC DNA]</scope>
    <source>
        <strain>MGAS8232</strain>
    </source>
</reference>
<sequence length="310" mass="34570">MTVTVKMLVQKVKLDVVYATDNLLSKEITTSDISRPGLEMTGYFDYYAPERLQLFGMKEWSYLTQMTSHNRYSVLKEMFKKDTPAVVVSRNLAIPKEMVQAAKEEGISLLSSRVSTSRLAGEMSYFLDASLAERTSVHGVLMDIYGMGVLIQGDSGIGKSETGLELVKRGHRLVADDRVDVYAKDEETLWGEPAEILRHLLEIRGVGIIDVMSLYGASAVKDSSQVQLAIYLENFEAGKVFDRLGNGNEEITFSGVRIPRIRIPVKTGRNVSVVIEAAAMNHRAKEMGFDATKTFEDRLTQLITKNEVSQ</sequence>
<organism>
    <name type="scientific">Streptococcus pyogenes serotype M18 (strain MGAS8232)</name>
    <dbReference type="NCBI Taxonomy" id="186103"/>
    <lineage>
        <taxon>Bacteria</taxon>
        <taxon>Bacillati</taxon>
        <taxon>Bacillota</taxon>
        <taxon>Bacilli</taxon>
        <taxon>Lactobacillales</taxon>
        <taxon>Streptococcaceae</taxon>
        <taxon>Streptococcus</taxon>
    </lineage>
</organism>
<comment type="function">
    <text evidence="1">Catalyzes the ATP- as well as the pyrophosphate-dependent phosphorylation of a specific serine residue in HPr, a phosphocarrier protein of the phosphoenolpyruvate-dependent sugar phosphotransferase system (PTS). HprK/P also catalyzes the pyrophosphate-producing, inorganic phosphate-dependent dephosphorylation (phosphorolysis) of seryl-phosphorylated HPr (P-Ser-HPr). The two antagonistic activities of HprK/P are regulated by several intracellular metabolites, which change their concentration in response to the absence or presence of rapidly metabolisable carbon sources (glucose, fructose, etc.) in the growth medium. Therefore, by controlling the phosphorylation state of HPr, HPrK/P is a sensor enzyme that plays a major role in the regulation of carbon metabolism and sugar transport: it mediates carbon catabolite repression (CCR), and regulates PTS-catalyzed carbohydrate uptake and inducer exclusion (By similarity).</text>
</comment>
<comment type="catalytic activity">
    <reaction>
        <text>[HPr protein]-L-serine + ATP = [HPr protein]-O-phospho-L-serine + ADP + H(+)</text>
        <dbReference type="Rhea" id="RHEA:46600"/>
        <dbReference type="Rhea" id="RHEA-COMP:11602"/>
        <dbReference type="Rhea" id="RHEA-COMP:11603"/>
        <dbReference type="ChEBI" id="CHEBI:15378"/>
        <dbReference type="ChEBI" id="CHEBI:29999"/>
        <dbReference type="ChEBI" id="CHEBI:30616"/>
        <dbReference type="ChEBI" id="CHEBI:83421"/>
        <dbReference type="ChEBI" id="CHEBI:456216"/>
    </reaction>
</comment>
<comment type="catalytic activity">
    <reaction>
        <text>[HPr protein]-O-phospho-L-serine + phosphate + H(+) = [HPr protein]-L-serine + diphosphate</text>
        <dbReference type="Rhea" id="RHEA:46604"/>
        <dbReference type="Rhea" id="RHEA-COMP:11602"/>
        <dbReference type="Rhea" id="RHEA-COMP:11603"/>
        <dbReference type="ChEBI" id="CHEBI:15378"/>
        <dbReference type="ChEBI" id="CHEBI:29999"/>
        <dbReference type="ChEBI" id="CHEBI:33019"/>
        <dbReference type="ChEBI" id="CHEBI:43474"/>
        <dbReference type="ChEBI" id="CHEBI:83421"/>
    </reaction>
</comment>
<comment type="cofactor">
    <cofactor evidence="1">
        <name>Mg(2+)</name>
        <dbReference type="ChEBI" id="CHEBI:18420"/>
    </cofactor>
</comment>
<comment type="subunit">
    <text evidence="1">Homohexamer.</text>
</comment>
<comment type="domain">
    <text evidence="1">The Walker A ATP-binding motif also binds Pi and PPi.</text>
</comment>
<comment type="miscellaneous">
    <text evidence="1">Both phosphorylation and phosphorolysis are carried out by the same active site and suggest a common mechanism for both reactions.</text>
</comment>
<comment type="similarity">
    <text evidence="3">Belongs to the HPrK/P family.</text>
</comment>
<comment type="sequence caution" evidence="3">
    <conflict type="erroneous initiation">
        <sequence resource="EMBL-CDS" id="AAL97333"/>
    </conflict>
</comment>
<name>HPRK_STRP8</name>
<dbReference type="EC" id="2.7.11.-"/>
<dbReference type="EC" id="2.7.4.-"/>
<dbReference type="EMBL" id="AE009949">
    <property type="protein sequence ID" value="AAL97333.1"/>
    <property type="status" value="ALT_INIT"/>
    <property type="molecule type" value="Genomic_DNA"/>
</dbReference>
<dbReference type="RefSeq" id="WP_002990580.1">
    <property type="nucleotide sequence ID" value="NC_003485.1"/>
</dbReference>
<dbReference type="SMR" id="P68899"/>
<dbReference type="GeneID" id="69901202"/>
<dbReference type="KEGG" id="spm:spyM18_0653"/>
<dbReference type="HOGENOM" id="CLU_052030_0_1_9"/>
<dbReference type="GO" id="GO:0005524">
    <property type="term" value="F:ATP binding"/>
    <property type="evidence" value="ECO:0007669"/>
    <property type="project" value="UniProtKB-UniRule"/>
</dbReference>
<dbReference type="GO" id="GO:0000287">
    <property type="term" value="F:magnesium ion binding"/>
    <property type="evidence" value="ECO:0007669"/>
    <property type="project" value="UniProtKB-UniRule"/>
</dbReference>
<dbReference type="GO" id="GO:0000155">
    <property type="term" value="F:phosphorelay sensor kinase activity"/>
    <property type="evidence" value="ECO:0007669"/>
    <property type="project" value="InterPro"/>
</dbReference>
<dbReference type="GO" id="GO:0004674">
    <property type="term" value="F:protein serine/threonine kinase activity"/>
    <property type="evidence" value="ECO:0007669"/>
    <property type="project" value="UniProtKB-KW"/>
</dbReference>
<dbReference type="GO" id="GO:0004712">
    <property type="term" value="F:protein serine/threonine/tyrosine kinase activity"/>
    <property type="evidence" value="ECO:0007669"/>
    <property type="project" value="UniProtKB-UniRule"/>
</dbReference>
<dbReference type="GO" id="GO:0006109">
    <property type="term" value="P:regulation of carbohydrate metabolic process"/>
    <property type="evidence" value="ECO:0007669"/>
    <property type="project" value="UniProtKB-UniRule"/>
</dbReference>
<dbReference type="CDD" id="cd01918">
    <property type="entry name" value="HprK_C"/>
    <property type="match status" value="1"/>
</dbReference>
<dbReference type="FunFam" id="3.40.50.300:FF:000174">
    <property type="entry name" value="HPr kinase/phosphorylase"/>
    <property type="match status" value="1"/>
</dbReference>
<dbReference type="Gene3D" id="3.40.1390.20">
    <property type="entry name" value="HprK N-terminal domain-like"/>
    <property type="match status" value="1"/>
</dbReference>
<dbReference type="Gene3D" id="3.40.50.300">
    <property type="entry name" value="P-loop containing nucleotide triphosphate hydrolases"/>
    <property type="match status" value="1"/>
</dbReference>
<dbReference type="HAMAP" id="MF_01249">
    <property type="entry name" value="HPr_kinase"/>
    <property type="match status" value="1"/>
</dbReference>
<dbReference type="InterPro" id="IPR003755">
    <property type="entry name" value="HPr(Ser)_kin/Pase"/>
</dbReference>
<dbReference type="InterPro" id="IPR011104">
    <property type="entry name" value="Hpr_kin/Pase_C"/>
</dbReference>
<dbReference type="InterPro" id="IPR011126">
    <property type="entry name" value="Hpr_kin/Pase_Hpr_N"/>
</dbReference>
<dbReference type="InterPro" id="IPR027417">
    <property type="entry name" value="P-loop_NTPase"/>
</dbReference>
<dbReference type="InterPro" id="IPR028979">
    <property type="entry name" value="Ser_kin/Pase_Hpr-like_N_sf"/>
</dbReference>
<dbReference type="NCBIfam" id="TIGR00679">
    <property type="entry name" value="hpr-ser"/>
    <property type="match status" value="1"/>
</dbReference>
<dbReference type="PANTHER" id="PTHR30305:SF1">
    <property type="entry name" value="HPR KINASE_PHOSPHORYLASE"/>
    <property type="match status" value="1"/>
</dbReference>
<dbReference type="PANTHER" id="PTHR30305">
    <property type="entry name" value="PROTEIN YJDM-RELATED"/>
    <property type="match status" value="1"/>
</dbReference>
<dbReference type="Pfam" id="PF07475">
    <property type="entry name" value="Hpr_kinase_C"/>
    <property type="match status" value="1"/>
</dbReference>
<dbReference type="Pfam" id="PF02603">
    <property type="entry name" value="Hpr_kinase_N"/>
    <property type="match status" value="1"/>
</dbReference>
<dbReference type="SUPFAM" id="SSF75138">
    <property type="entry name" value="HprK N-terminal domain-like"/>
    <property type="match status" value="1"/>
</dbReference>
<dbReference type="SUPFAM" id="SSF53795">
    <property type="entry name" value="PEP carboxykinase-like"/>
    <property type="match status" value="1"/>
</dbReference>
<gene>
    <name type="primary">hprK</name>
    <name type="synonym">ptsK</name>
    <name type="ordered locus">spyM18_0653</name>
</gene>
<accession>P68899</accession>
<accession>P82557</accession>
<accession>Q9A0W5</accession>
<keyword id="KW-0067">ATP-binding</keyword>
<keyword id="KW-0119">Carbohydrate metabolism</keyword>
<keyword id="KW-0418">Kinase</keyword>
<keyword id="KW-0460">Magnesium</keyword>
<keyword id="KW-0479">Metal-binding</keyword>
<keyword id="KW-0511">Multifunctional enzyme</keyword>
<keyword id="KW-0547">Nucleotide-binding</keyword>
<keyword id="KW-0723">Serine/threonine-protein kinase</keyword>
<keyword id="KW-0808">Transferase</keyword>